<dbReference type="EMBL" id="L02426">
    <property type="protein sequence ID" value="AAA35484.1"/>
    <property type="molecule type" value="mRNA"/>
</dbReference>
<dbReference type="EMBL" id="AK299121">
    <property type="protein sequence ID" value="BAG61175.1"/>
    <property type="molecule type" value="mRNA"/>
</dbReference>
<dbReference type="EMBL" id="CR457044">
    <property type="protein sequence ID" value="CAG33325.1"/>
    <property type="molecule type" value="mRNA"/>
</dbReference>
<dbReference type="EMBL" id="AL161662">
    <property type="status" value="NOT_ANNOTATED_CDS"/>
    <property type="molecule type" value="Genomic_DNA"/>
</dbReference>
<dbReference type="EMBL" id="AL355074">
    <property type="status" value="NOT_ANNOTATED_CDS"/>
    <property type="molecule type" value="Genomic_DNA"/>
</dbReference>
<dbReference type="EMBL" id="BC000512">
    <property type="protein sequence ID" value="AAH00512.1"/>
    <property type="molecule type" value="mRNA"/>
</dbReference>
<dbReference type="EMBL" id="BC016368">
    <property type="protein sequence ID" value="AAH16368.1"/>
    <property type="molecule type" value="mRNA"/>
</dbReference>
<dbReference type="EMBL" id="BC067741">
    <property type="protein sequence ID" value="AAH67741.1"/>
    <property type="molecule type" value="mRNA"/>
</dbReference>
<dbReference type="EMBL" id="BC073818">
    <property type="protein sequence ID" value="AAH73818.1"/>
    <property type="molecule type" value="mRNA"/>
</dbReference>
<dbReference type="CCDS" id="CCDS32139.1">
    <molecule id="P62191-1"/>
</dbReference>
<dbReference type="CCDS" id="CCDS81837.1">
    <molecule id="P62191-2"/>
</dbReference>
<dbReference type="PIR" id="A44468">
    <property type="entry name" value="A44468"/>
</dbReference>
<dbReference type="RefSeq" id="NP_001317141.1">
    <molecule id="P62191-2"/>
    <property type="nucleotide sequence ID" value="NM_001330212.2"/>
</dbReference>
<dbReference type="RefSeq" id="NP_002793.2">
    <molecule id="P62191-1"/>
    <property type="nucleotide sequence ID" value="NM_002802.2"/>
</dbReference>
<dbReference type="RefSeq" id="XP_016876959.1">
    <property type="nucleotide sequence ID" value="XM_017021470.1"/>
</dbReference>
<dbReference type="RefSeq" id="XP_054232396.1">
    <molecule id="P62191-1"/>
    <property type="nucleotide sequence ID" value="XM_054376421.1"/>
</dbReference>
<dbReference type="PDB" id="5GJQ">
    <property type="method" value="EM"/>
    <property type="resolution" value="4.50 A"/>
    <property type="chains" value="I=1-440"/>
</dbReference>
<dbReference type="PDB" id="5GJR">
    <property type="method" value="EM"/>
    <property type="resolution" value="3.50 A"/>
    <property type="chains" value="I/w=1-440"/>
</dbReference>
<dbReference type="PDB" id="5L4G">
    <property type="method" value="EM"/>
    <property type="resolution" value="4.02 A"/>
    <property type="chains" value="I=1-440"/>
</dbReference>
<dbReference type="PDB" id="5LN3">
    <property type="method" value="EM"/>
    <property type="resolution" value="6.80 A"/>
    <property type="chains" value="I=1-440"/>
</dbReference>
<dbReference type="PDB" id="5M32">
    <property type="method" value="EM"/>
    <property type="resolution" value="3.80 A"/>
    <property type="chains" value="d=1-428"/>
</dbReference>
<dbReference type="PDB" id="5T0C">
    <property type="method" value="EM"/>
    <property type="resolution" value="3.80 A"/>
    <property type="chains" value="AB/BB=1-440"/>
</dbReference>
<dbReference type="PDB" id="5T0G">
    <property type="method" value="EM"/>
    <property type="resolution" value="4.40 A"/>
    <property type="chains" value="B=1-440"/>
</dbReference>
<dbReference type="PDB" id="5T0H">
    <property type="method" value="EM"/>
    <property type="resolution" value="6.80 A"/>
    <property type="chains" value="B=1-440"/>
</dbReference>
<dbReference type="PDB" id="5T0I">
    <property type="method" value="EM"/>
    <property type="resolution" value="8.00 A"/>
    <property type="chains" value="B=1-440"/>
</dbReference>
<dbReference type="PDB" id="5T0J">
    <property type="method" value="EM"/>
    <property type="resolution" value="8.00 A"/>
    <property type="chains" value="B=1-440"/>
</dbReference>
<dbReference type="PDB" id="5VFP">
    <property type="method" value="EM"/>
    <property type="resolution" value="4.20 A"/>
    <property type="chains" value="B=52-440"/>
</dbReference>
<dbReference type="PDB" id="5VFQ">
    <property type="method" value="EM"/>
    <property type="resolution" value="4.20 A"/>
    <property type="chains" value="B=52-440"/>
</dbReference>
<dbReference type="PDB" id="5VFR">
    <property type="method" value="EM"/>
    <property type="resolution" value="4.90 A"/>
    <property type="chains" value="B=52-440"/>
</dbReference>
<dbReference type="PDB" id="5VFS">
    <property type="method" value="EM"/>
    <property type="resolution" value="3.60 A"/>
    <property type="chains" value="B=65-433"/>
</dbReference>
<dbReference type="PDB" id="5VFT">
    <property type="method" value="EM"/>
    <property type="resolution" value="7.00 A"/>
    <property type="chains" value="B=93-433"/>
</dbReference>
<dbReference type="PDB" id="5VFU">
    <property type="method" value="EM"/>
    <property type="resolution" value="5.80 A"/>
    <property type="chains" value="B=93-440"/>
</dbReference>
<dbReference type="PDB" id="5VGZ">
    <property type="method" value="EM"/>
    <property type="resolution" value="3.70 A"/>
    <property type="chains" value="B=93-165"/>
</dbReference>
<dbReference type="PDB" id="5VHF">
    <property type="method" value="EM"/>
    <property type="resolution" value="5.70 A"/>
    <property type="chains" value="B=93-432"/>
</dbReference>
<dbReference type="PDB" id="5VHH">
    <property type="method" value="EM"/>
    <property type="resolution" value="6.10 A"/>
    <property type="chains" value="B=93-432"/>
</dbReference>
<dbReference type="PDB" id="5VHI">
    <property type="method" value="EM"/>
    <property type="resolution" value="6.80 A"/>
    <property type="chains" value="B=93-433"/>
</dbReference>
<dbReference type="PDB" id="5VHJ">
    <property type="method" value="EM"/>
    <property type="resolution" value="8.50 A"/>
    <property type="chains" value="B=167-432"/>
</dbReference>
<dbReference type="PDB" id="5VHM">
    <property type="method" value="EM"/>
    <property type="resolution" value="8.30 A"/>
    <property type="chains" value="B=167-432"/>
</dbReference>
<dbReference type="PDB" id="5VHN">
    <property type="method" value="EM"/>
    <property type="resolution" value="7.30 A"/>
    <property type="chains" value="B=167-432"/>
</dbReference>
<dbReference type="PDB" id="5VHO">
    <property type="method" value="EM"/>
    <property type="resolution" value="8.30 A"/>
    <property type="chains" value="B=167-433"/>
</dbReference>
<dbReference type="PDB" id="5VHP">
    <property type="method" value="EM"/>
    <property type="resolution" value="7.90 A"/>
    <property type="chains" value="B=167-432"/>
</dbReference>
<dbReference type="PDB" id="5VHQ">
    <property type="method" value="EM"/>
    <property type="resolution" value="8.90 A"/>
    <property type="chains" value="B=167-433"/>
</dbReference>
<dbReference type="PDB" id="5VHR">
    <property type="method" value="EM"/>
    <property type="resolution" value="7.70 A"/>
    <property type="chains" value="B=167-433"/>
</dbReference>
<dbReference type="PDB" id="5VHS">
    <property type="method" value="EM"/>
    <property type="resolution" value="8.80 A"/>
    <property type="chains" value="B=93-433"/>
</dbReference>
<dbReference type="PDB" id="6MSB">
    <property type="method" value="EM"/>
    <property type="resolution" value="3.00 A"/>
    <property type="chains" value="B=1-440"/>
</dbReference>
<dbReference type="PDB" id="6MSD">
    <property type="method" value="EM"/>
    <property type="resolution" value="3.20 A"/>
    <property type="chains" value="B=1-440"/>
</dbReference>
<dbReference type="PDB" id="6MSG">
    <property type="method" value="EM"/>
    <property type="resolution" value="3.50 A"/>
    <property type="chains" value="B=1-440"/>
</dbReference>
<dbReference type="PDB" id="6MSH">
    <property type="method" value="EM"/>
    <property type="resolution" value="3.60 A"/>
    <property type="chains" value="B=1-440"/>
</dbReference>
<dbReference type="PDB" id="6MSJ">
    <property type="method" value="EM"/>
    <property type="resolution" value="3.30 A"/>
    <property type="chains" value="B=1-440"/>
</dbReference>
<dbReference type="PDB" id="6MSK">
    <property type="method" value="EM"/>
    <property type="resolution" value="3.20 A"/>
    <property type="chains" value="B=1-440"/>
</dbReference>
<dbReference type="PDB" id="6WJD">
    <property type="method" value="EM"/>
    <property type="resolution" value="4.80 A"/>
    <property type="chains" value="B=1-440"/>
</dbReference>
<dbReference type="PDB" id="6WJN">
    <property type="method" value="EM"/>
    <property type="resolution" value="5.70 A"/>
    <property type="chains" value="B=52-440"/>
</dbReference>
<dbReference type="PDB" id="7QXN">
    <property type="method" value="EM"/>
    <property type="resolution" value="3.70 A"/>
    <property type="chains" value="B=1-440"/>
</dbReference>
<dbReference type="PDB" id="7QXP">
    <property type="method" value="EM"/>
    <property type="resolution" value="3.60 A"/>
    <property type="chains" value="B=1-440"/>
</dbReference>
<dbReference type="PDB" id="7QXU">
    <property type="method" value="EM"/>
    <property type="resolution" value="4.30 A"/>
    <property type="chains" value="B=1-429"/>
</dbReference>
<dbReference type="PDB" id="7QXW">
    <property type="method" value="EM"/>
    <property type="resolution" value="4.10 A"/>
    <property type="chains" value="B=1-432"/>
</dbReference>
<dbReference type="PDB" id="7QXX">
    <property type="method" value="EM"/>
    <property type="resolution" value="4.40 A"/>
    <property type="chains" value="B=1-429"/>
</dbReference>
<dbReference type="PDB" id="7QY7">
    <property type="method" value="EM"/>
    <property type="resolution" value="4.70 A"/>
    <property type="chains" value="B=1-440"/>
</dbReference>
<dbReference type="PDB" id="7QYA">
    <property type="method" value="EM"/>
    <property type="resolution" value="4.80 A"/>
    <property type="chains" value="B=1-440"/>
</dbReference>
<dbReference type="PDB" id="7QYB">
    <property type="method" value="EM"/>
    <property type="resolution" value="4.10 A"/>
    <property type="chains" value="B=1-440"/>
</dbReference>
<dbReference type="PDB" id="7W37">
    <property type="method" value="EM"/>
    <property type="resolution" value="3.00 A"/>
    <property type="chains" value="B=1-440"/>
</dbReference>
<dbReference type="PDB" id="7W38">
    <property type="method" value="EM"/>
    <property type="resolution" value="3.10 A"/>
    <property type="chains" value="B=1-440"/>
</dbReference>
<dbReference type="PDB" id="7W39">
    <property type="method" value="EM"/>
    <property type="resolution" value="3.20 A"/>
    <property type="chains" value="B=1-440"/>
</dbReference>
<dbReference type="PDB" id="7W3A">
    <property type="method" value="EM"/>
    <property type="resolution" value="3.50 A"/>
    <property type="chains" value="B=1-440"/>
</dbReference>
<dbReference type="PDB" id="7W3B">
    <property type="method" value="EM"/>
    <property type="resolution" value="3.60 A"/>
    <property type="chains" value="B=1-440"/>
</dbReference>
<dbReference type="PDB" id="7W3C">
    <property type="method" value="EM"/>
    <property type="resolution" value="3.40 A"/>
    <property type="chains" value="B=1-440"/>
</dbReference>
<dbReference type="PDB" id="7W3F">
    <property type="method" value="EM"/>
    <property type="resolution" value="3.30 A"/>
    <property type="chains" value="B=1-440"/>
</dbReference>
<dbReference type="PDB" id="7W3G">
    <property type="method" value="EM"/>
    <property type="resolution" value="3.20 A"/>
    <property type="chains" value="B=1-440"/>
</dbReference>
<dbReference type="PDB" id="7W3H">
    <property type="method" value="EM"/>
    <property type="resolution" value="3.20 A"/>
    <property type="chains" value="B=1-440"/>
</dbReference>
<dbReference type="PDB" id="7W3I">
    <property type="method" value="EM"/>
    <property type="resolution" value="3.50 A"/>
    <property type="chains" value="B=1-440"/>
</dbReference>
<dbReference type="PDB" id="7W3J">
    <property type="method" value="EM"/>
    <property type="resolution" value="3.50 A"/>
    <property type="chains" value="B=1-440"/>
</dbReference>
<dbReference type="PDB" id="7W3K">
    <property type="method" value="EM"/>
    <property type="resolution" value="3.60 A"/>
    <property type="chains" value="B=1-440"/>
</dbReference>
<dbReference type="PDB" id="7W3M">
    <property type="method" value="EM"/>
    <property type="resolution" value="3.50 A"/>
    <property type="chains" value="B=1-440"/>
</dbReference>
<dbReference type="PDB" id="8CVT">
    <property type="method" value="EM"/>
    <property type="resolution" value="3.00 A"/>
    <property type="chains" value="B=1-440"/>
</dbReference>
<dbReference type="PDB" id="8JRI">
    <property type="method" value="EM"/>
    <property type="resolution" value="3.40 A"/>
    <property type="chains" value="B=1-440"/>
</dbReference>
<dbReference type="PDB" id="8JRT">
    <property type="method" value="EM"/>
    <property type="resolution" value="3.60 A"/>
    <property type="chains" value="B=1-440"/>
</dbReference>
<dbReference type="PDB" id="8JTI">
    <property type="method" value="EM"/>
    <property type="resolution" value="3.80 A"/>
    <property type="chains" value="B=1-440"/>
</dbReference>
<dbReference type="PDB" id="8K0G">
    <property type="method" value="EM"/>
    <property type="resolution" value="3.80 A"/>
    <property type="chains" value="B=1-440"/>
</dbReference>
<dbReference type="PDB" id="8USB">
    <property type="method" value="EM"/>
    <property type="resolution" value="2.73 A"/>
    <property type="chains" value="B=1-440"/>
</dbReference>
<dbReference type="PDB" id="8USC">
    <property type="method" value="EM"/>
    <property type="resolution" value="3.10 A"/>
    <property type="chains" value="B=1-440"/>
</dbReference>
<dbReference type="PDB" id="8USD">
    <property type="method" value="EM"/>
    <property type="resolution" value="2.70 A"/>
    <property type="chains" value="B=1-440"/>
</dbReference>
<dbReference type="PDB" id="9E8G">
    <property type="method" value="EM"/>
    <property type="resolution" value="3.01 A"/>
    <property type="chains" value="B=1-440"/>
</dbReference>
<dbReference type="PDB" id="9E8H">
    <property type="method" value="EM"/>
    <property type="resolution" value="2.90 A"/>
    <property type="chains" value="B=1-440"/>
</dbReference>
<dbReference type="PDB" id="9E8I">
    <property type="method" value="EM"/>
    <property type="resolution" value="2.87 A"/>
    <property type="chains" value="B=1-440"/>
</dbReference>
<dbReference type="PDB" id="9E8J">
    <property type="method" value="EM"/>
    <property type="resolution" value="3.47 A"/>
    <property type="chains" value="B=1-440"/>
</dbReference>
<dbReference type="PDB" id="9E8K">
    <property type="method" value="EM"/>
    <property type="resolution" value="4.08 A"/>
    <property type="chains" value="B=1-440"/>
</dbReference>
<dbReference type="PDB" id="9E8L">
    <property type="method" value="EM"/>
    <property type="resolution" value="3.59 A"/>
    <property type="chains" value="B=1-440"/>
</dbReference>
<dbReference type="PDB" id="9E8N">
    <property type="method" value="EM"/>
    <property type="resolution" value="3.62 A"/>
    <property type="chains" value="B=1-440"/>
</dbReference>
<dbReference type="PDB" id="9E8O">
    <property type="method" value="EM"/>
    <property type="resolution" value="3.10 A"/>
    <property type="chains" value="B=1-440"/>
</dbReference>
<dbReference type="PDB" id="9E8Q">
    <property type="method" value="EM"/>
    <property type="resolution" value="3.16 A"/>
    <property type="chains" value="B=1-440"/>
</dbReference>
<dbReference type="PDBsum" id="5GJQ"/>
<dbReference type="PDBsum" id="5GJR"/>
<dbReference type="PDBsum" id="5L4G"/>
<dbReference type="PDBsum" id="5LN3"/>
<dbReference type="PDBsum" id="5M32"/>
<dbReference type="PDBsum" id="5T0C"/>
<dbReference type="PDBsum" id="5T0G"/>
<dbReference type="PDBsum" id="5T0H"/>
<dbReference type="PDBsum" id="5T0I"/>
<dbReference type="PDBsum" id="5T0J"/>
<dbReference type="PDBsum" id="5VFP"/>
<dbReference type="PDBsum" id="5VFQ"/>
<dbReference type="PDBsum" id="5VFR"/>
<dbReference type="PDBsum" id="5VFS"/>
<dbReference type="PDBsum" id="5VFT"/>
<dbReference type="PDBsum" id="5VFU"/>
<dbReference type="PDBsum" id="5VGZ"/>
<dbReference type="PDBsum" id="5VHF"/>
<dbReference type="PDBsum" id="5VHH"/>
<dbReference type="PDBsum" id="5VHI"/>
<dbReference type="PDBsum" id="5VHJ"/>
<dbReference type="PDBsum" id="5VHM"/>
<dbReference type="PDBsum" id="5VHN"/>
<dbReference type="PDBsum" id="5VHO"/>
<dbReference type="PDBsum" id="5VHP"/>
<dbReference type="PDBsum" id="5VHQ"/>
<dbReference type="PDBsum" id="5VHR"/>
<dbReference type="PDBsum" id="5VHS"/>
<dbReference type="PDBsum" id="6MSB"/>
<dbReference type="PDBsum" id="6MSD"/>
<dbReference type="PDBsum" id="6MSG"/>
<dbReference type="PDBsum" id="6MSH"/>
<dbReference type="PDBsum" id="6MSJ"/>
<dbReference type="PDBsum" id="6MSK"/>
<dbReference type="PDBsum" id="6WJD"/>
<dbReference type="PDBsum" id="6WJN"/>
<dbReference type="PDBsum" id="7QXN"/>
<dbReference type="PDBsum" id="7QXP"/>
<dbReference type="PDBsum" id="7QXU"/>
<dbReference type="PDBsum" id="7QXW"/>
<dbReference type="PDBsum" id="7QXX"/>
<dbReference type="PDBsum" id="7QY7"/>
<dbReference type="PDBsum" id="7QYA"/>
<dbReference type="PDBsum" id="7QYB"/>
<dbReference type="PDBsum" id="7W37"/>
<dbReference type="PDBsum" id="7W38"/>
<dbReference type="PDBsum" id="7W39"/>
<dbReference type="PDBsum" id="7W3A"/>
<dbReference type="PDBsum" id="7W3B"/>
<dbReference type="PDBsum" id="7W3C"/>
<dbReference type="PDBsum" id="7W3F"/>
<dbReference type="PDBsum" id="7W3G"/>
<dbReference type="PDBsum" id="7W3H"/>
<dbReference type="PDBsum" id="7W3I"/>
<dbReference type="PDBsum" id="7W3J"/>
<dbReference type="PDBsum" id="7W3K"/>
<dbReference type="PDBsum" id="7W3M"/>
<dbReference type="PDBsum" id="8CVT"/>
<dbReference type="PDBsum" id="8JRI"/>
<dbReference type="PDBsum" id="8JRT"/>
<dbReference type="PDBsum" id="8JTI"/>
<dbReference type="PDBsum" id="8K0G"/>
<dbReference type="PDBsum" id="8USB"/>
<dbReference type="PDBsum" id="8USC"/>
<dbReference type="PDBsum" id="8USD"/>
<dbReference type="PDBsum" id="9E8G"/>
<dbReference type="PDBsum" id="9E8H"/>
<dbReference type="PDBsum" id="9E8I"/>
<dbReference type="PDBsum" id="9E8J"/>
<dbReference type="PDBsum" id="9E8K"/>
<dbReference type="PDBsum" id="9E8L"/>
<dbReference type="PDBsum" id="9E8N"/>
<dbReference type="PDBsum" id="9E8O"/>
<dbReference type="PDBsum" id="9E8Q"/>
<dbReference type="EMDB" id="EMD-14201"/>
<dbReference type="EMDB" id="EMD-14202"/>
<dbReference type="EMDB" id="EMD-14203"/>
<dbReference type="EMDB" id="EMD-14204"/>
<dbReference type="EMDB" id="EMD-14205"/>
<dbReference type="EMDB" id="EMD-14209"/>
<dbReference type="EMDB" id="EMD-14210"/>
<dbReference type="EMDB" id="EMD-14211"/>
<dbReference type="EMDB" id="EMD-21691"/>
<dbReference type="EMDB" id="EMD-21696"/>
<dbReference type="EMDB" id="EMD-27018"/>
<dbReference type="EMDB" id="EMD-32272"/>
<dbReference type="EMDB" id="EMD-32273"/>
<dbReference type="EMDB" id="EMD-32274"/>
<dbReference type="EMDB" id="EMD-32275"/>
<dbReference type="EMDB" id="EMD-32276"/>
<dbReference type="EMDB" id="EMD-32277"/>
<dbReference type="EMDB" id="EMD-32278"/>
<dbReference type="EMDB" id="EMD-32279"/>
<dbReference type="EMDB" id="EMD-32280"/>
<dbReference type="EMDB" id="EMD-32281"/>
<dbReference type="EMDB" id="EMD-32282"/>
<dbReference type="EMDB" id="EMD-32283"/>
<dbReference type="EMDB" id="EMD-32284"/>
<dbReference type="EMDB" id="EMD-36598"/>
<dbReference type="EMDB" id="EMD-36605"/>
<dbReference type="EMDB" id="EMD-36645"/>
<dbReference type="EMDB" id="EMD-36764"/>
<dbReference type="EMDB" id="EMD-4089"/>
<dbReference type="EMDB" id="EMD-42506"/>
<dbReference type="EMDB" id="EMD-42507"/>
<dbReference type="EMDB" id="EMD-42508"/>
<dbReference type="EMDB" id="EMD-47719"/>
<dbReference type="EMDB" id="EMD-47720"/>
<dbReference type="EMDB" id="EMD-47721"/>
<dbReference type="EMDB" id="EMD-47722"/>
<dbReference type="EMDB" id="EMD-47723"/>
<dbReference type="EMDB" id="EMD-47724"/>
<dbReference type="EMDB" id="EMD-47725"/>
<dbReference type="EMDB" id="EMD-47726"/>
<dbReference type="EMDB" id="EMD-47727"/>
<dbReference type="EMDB" id="EMD-60138"/>
<dbReference type="EMDB" id="EMD-60139"/>
<dbReference type="EMDB" id="EMD-8663"/>
<dbReference type="EMDB" id="EMD-8664"/>
<dbReference type="EMDB" id="EMD-8665"/>
<dbReference type="EMDB" id="EMD-8666"/>
<dbReference type="EMDB" id="EMD-8667"/>
<dbReference type="EMDB" id="EMD-8668"/>
<dbReference type="EMDB" id="EMD-8672"/>
<dbReference type="EMDB" id="EMD-8674"/>
<dbReference type="EMDB" id="EMD-8675"/>
<dbReference type="EMDB" id="EMD-8676"/>
<dbReference type="EMDB" id="EMD-8677"/>
<dbReference type="EMDB" id="EMD-8678"/>
<dbReference type="EMDB" id="EMD-8679"/>
<dbReference type="EMDB" id="EMD-8680"/>
<dbReference type="EMDB" id="EMD-8681"/>
<dbReference type="EMDB" id="EMD-8682"/>
<dbReference type="EMDB" id="EMD-8683"/>
<dbReference type="EMDB" id="EMD-8684"/>
<dbReference type="EMDB" id="EMD-9216"/>
<dbReference type="EMDB" id="EMD-9217"/>
<dbReference type="EMDB" id="EMD-9218"/>
<dbReference type="EMDB" id="EMD-9219"/>
<dbReference type="EMDB" id="EMD-9220"/>
<dbReference type="EMDB" id="EMD-9221"/>
<dbReference type="EMDB" id="EMD-9222"/>
<dbReference type="EMDB" id="EMD-9512"/>
<dbReference type="SMR" id="P62191"/>
<dbReference type="BioGRID" id="111673">
    <property type="interactions" value="382"/>
</dbReference>
<dbReference type="ComplexPortal" id="CPX-5993">
    <property type="entry name" value="26S proteasome complex"/>
</dbReference>
<dbReference type="ComplexPortal" id="CPX-8964">
    <property type="entry name" value="19S proteasome regulatory complex"/>
</dbReference>
<dbReference type="ComplexPortal" id="CPX-9082">
    <property type="entry name" value="19S-20S-PA28-alphabeta hybrid proteasome complex"/>
</dbReference>
<dbReference type="ComplexPortal" id="CPX-9085">
    <property type="entry name" value="19S-20S-PA28-gamma hybrid proteasome complex"/>
</dbReference>
<dbReference type="ComplexPortal" id="CPX-9086">
    <property type="entry name" value="30S proteasome complex"/>
</dbReference>
<dbReference type="CORUM" id="P62191"/>
<dbReference type="FunCoup" id="P62191">
    <property type="interactions" value="2478"/>
</dbReference>
<dbReference type="IntAct" id="P62191">
    <property type="interactions" value="150"/>
</dbReference>
<dbReference type="MINT" id="P62191"/>
<dbReference type="STRING" id="9606.ENSP00000261303"/>
<dbReference type="ChEMBL" id="CHEMBL2364701"/>
<dbReference type="CarbonylDB" id="P62191"/>
<dbReference type="GlyGen" id="P62191">
    <property type="glycosylation" value="1 site, 1 O-linked glycan (1 site)"/>
</dbReference>
<dbReference type="iPTMnet" id="P62191"/>
<dbReference type="MetOSite" id="P62191"/>
<dbReference type="PhosphoSitePlus" id="P62191"/>
<dbReference type="SwissPalm" id="P62191"/>
<dbReference type="BioMuta" id="PSMC1"/>
<dbReference type="DMDM" id="49065817"/>
<dbReference type="jPOST" id="P62191"/>
<dbReference type="MassIVE" id="P62191"/>
<dbReference type="PaxDb" id="9606-ENSP00000261303"/>
<dbReference type="PeptideAtlas" id="P62191"/>
<dbReference type="PRIDE" id="P62191"/>
<dbReference type="ProteomicsDB" id="4926"/>
<dbReference type="ProteomicsDB" id="57370">
    <molecule id="P62191-1"/>
</dbReference>
<dbReference type="Pumba" id="P62191"/>
<dbReference type="Antibodypedia" id="82">
    <property type="antibodies" value="182 antibodies from 33 providers"/>
</dbReference>
<dbReference type="DNASU" id="5700"/>
<dbReference type="Ensembl" id="ENST00000261303.13">
    <molecule id="P62191-1"/>
    <property type="protein sequence ID" value="ENSP00000261303.8"/>
    <property type="gene ID" value="ENSG00000100764.14"/>
</dbReference>
<dbReference type="Ensembl" id="ENST00000543772.2">
    <molecule id="P62191-2"/>
    <property type="protein sequence ID" value="ENSP00000445147.2"/>
    <property type="gene ID" value="ENSG00000100764.14"/>
</dbReference>
<dbReference type="GeneID" id="5700"/>
<dbReference type="KEGG" id="hsa:5700"/>
<dbReference type="MANE-Select" id="ENST00000261303.13">
    <property type="protein sequence ID" value="ENSP00000261303.8"/>
    <property type="RefSeq nucleotide sequence ID" value="NM_002802.3"/>
    <property type="RefSeq protein sequence ID" value="NP_002793.2"/>
</dbReference>
<dbReference type="UCSC" id="uc001xyg.4">
    <molecule id="P62191-1"/>
    <property type="organism name" value="human"/>
</dbReference>
<dbReference type="AGR" id="HGNC:9547"/>
<dbReference type="CTD" id="5700"/>
<dbReference type="DisGeNET" id="5700"/>
<dbReference type="GeneCards" id="PSMC1"/>
<dbReference type="HGNC" id="HGNC:9547">
    <property type="gene designation" value="PSMC1"/>
</dbReference>
<dbReference type="HPA" id="ENSG00000100764">
    <property type="expression patterns" value="Tissue enhanced (skeletal)"/>
</dbReference>
<dbReference type="MalaCards" id="PSMC1"/>
<dbReference type="MIM" id="602706">
    <property type="type" value="gene"/>
</dbReference>
<dbReference type="MIM" id="620071">
    <property type="type" value="phenotype"/>
</dbReference>
<dbReference type="neXtProt" id="NX_P62191"/>
<dbReference type="OpenTargets" id="ENSG00000100764"/>
<dbReference type="PharmGKB" id="PA33892"/>
<dbReference type="VEuPathDB" id="HostDB:ENSG00000100764"/>
<dbReference type="eggNOG" id="KOG0726">
    <property type="taxonomic scope" value="Eukaryota"/>
</dbReference>
<dbReference type="GeneTree" id="ENSGT01020000230346"/>
<dbReference type="HOGENOM" id="CLU_000688_2_3_1"/>
<dbReference type="InParanoid" id="P62191"/>
<dbReference type="OMA" id="QDDTDPM"/>
<dbReference type="OrthoDB" id="9524666at2759"/>
<dbReference type="PAN-GO" id="P62191">
    <property type="GO annotations" value="3 GO annotations based on evolutionary models"/>
</dbReference>
<dbReference type="PhylomeDB" id="P62191"/>
<dbReference type="TreeFam" id="TF106226"/>
<dbReference type="PathwayCommons" id="P62191"/>
<dbReference type="Reactome" id="R-HSA-1169091">
    <property type="pathway name" value="Activation of NF-kappaB in B cells"/>
</dbReference>
<dbReference type="Reactome" id="R-HSA-1234176">
    <property type="pathway name" value="Oxygen-dependent proline hydroxylation of Hypoxia-inducible Factor Alpha"/>
</dbReference>
<dbReference type="Reactome" id="R-HSA-1236974">
    <property type="pathway name" value="ER-Phagosome pathway"/>
</dbReference>
<dbReference type="Reactome" id="R-HSA-1236978">
    <property type="pathway name" value="Cross-presentation of soluble exogenous antigens (endosomes)"/>
</dbReference>
<dbReference type="Reactome" id="R-HSA-174084">
    <property type="pathway name" value="Autodegradation of Cdh1 by Cdh1:APC/C"/>
</dbReference>
<dbReference type="Reactome" id="R-HSA-174113">
    <property type="pathway name" value="SCF-beta-TrCP mediated degradation of Emi1"/>
</dbReference>
<dbReference type="Reactome" id="R-HSA-174154">
    <property type="pathway name" value="APC/C:Cdc20 mediated degradation of Securin"/>
</dbReference>
<dbReference type="Reactome" id="R-HSA-174178">
    <property type="pathway name" value="APC/C:Cdh1 mediated degradation of Cdc20 and other APC/C:Cdh1 targeted proteins in late mitosis/early G1"/>
</dbReference>
<dbReference type="Reactome" id="R-HSA-174184">
    <property type="pathway name" value="Cdc20:Phospho-APC/C mediated degradation of Cyclin A"/>
</dbReference>
<dbReference type="Reactome" id="R-HSA-180534">
    <property type="pathway name" value="Vpu mediated degradation of CD4"/>
</dbReference>
<dbReference type="Reactome" id="R-HSA-180585">
    <property type="pathway name" value="Vif-mediated degradation of APOBEC3G"/>
</dbReference>
<dbReference type="Reactome" id="R-HSA-187577">
    <property type="pathway name" value="SCF(Skp2)-mediated degradation of p27/p21"/>
</dbReference>
<dbReference type="Reactome" id="R-HSA-195253">
    <property type="pathway name" value="Degradation of beta-catenin by the destruction complex"/>
</dbReference>
<dbReference type="Reactome" id="R-HSA-202424">
    <property type="pathway name" value="Downstream TCR signaling"/>
</dbReference>
<dbReference type="Reactome" id="R-HSA-211733">
    <property type="pathway name" value="Regulation of activated PAK-2p34 by proteasome mediated degradation"/>
</dbReference>
<dbReference type="Reactome" id="R-HSA-2467813">
    <property type="pathway name" value="Separation of Sister Chromatids"/>
</dbReference>
<dbReference type="Reactome" id="R-HSA-2871837">
    <property type="pathway name" value="FCERI mediated NF-kB activation"/>
</dbReference>
<dbReference type="Reactome" id="R-HSA-349425">
    <property type="pathway name" value="Autodegradation of the E3 ubiquitin ligase COP1"/>
</dbReference>
<dbReference type="Reactome" id="R-HSA-350562">
    <property type="pathway name" value="Regulation of ornithine decarboxylase (ODC)"/>
</dbReference>
<dbReference type="Reactome" id="R-HSA-382556">
    <property type="pathway name" value="ABC-family proteins mediated transport"/>
</dbReference>
<dbReference type="Reactome" id="R-HSA-450408">
    <property type="pathway name" value="AUF1 (hnRNP D0) binds and destabilizes mRNA"/>
</dbReference>
<dbReference type="Reactome" id="R-HSA-4608870">
    <property type="pathway name" value="Asymmetric localization of PCP proteins"/>
</dbReference>
<dbReference type="Reactome" id="R-HSA-4641257">
    <property type="pathway name" value="Degradation of AXIN"/>
</dbReference>
<dbReference type="Reactome" id="R-HSA-4641258">
    <property type="pathway name" value="Degradation of DVL"/>
</dbReference>
<dbReference type="Reactome" id="R-HSA-532668">
    <property type="pathway name" value="N-glycan trimming in the ER and Calnexin/Calreticulin cycle"/>
</dbReference>
<dbReference type="Reactome" id="R-HSA-5358346">
    <property type="pathway name" value="Hedgehog ligand biogenesis"/>
</dbReference>
<dbReference type="Reactome" id="R-HSA-5362768">
    <property type="pathway name" value="Hh mutants are degraded by ERAD"/>
</dbReference>
<dbReference type="Reactome" id="R-HSA-5607761">
    <property type="pathway name" value="Dectin-1 mediated noncanonical NF-kB signaling"/>
</dbReference>
<dbReference type="Reactome" id="R-HSA-5607764">
    <property type="pathway name" value="CLEC7A (Dectin-1) signaling"/>
</dbReference>
<dbReference type="Reactome" id="R-HSA-5610780">
    <property type="pathway name" value="Degradation of GLI1 by the proteasome"/>
</dbReference>
<dbReference type="Reactome" id="R-HSA-5610783">
    <property type="pathway name" value="Degradation of GLI2 by the proteasome"/>
</dbReference>
<dbReference type="Reactome" id="R-HSA-5610785">
    <property type="pathway name" value="GLI3 is processed to GLI3R by the proteasome"/>
</dbReference>
<dbReference type="Reactome" id="R-HSA-5632684">
    <property type="pathway name" value="Hedgehog 'on' state"/>
</dbReference>
<dbReference type="Reactome" id="R-HSA-5658442">
    <property type="pathway name" value="Regulation of RAS by GAPs"/>
</dbReference>
<dbReference type="Reactome" id="R-HSA-5668541">
    <property type="pathway name" value="TNFR2 non-canonical NF-kB pathway"/>
</dbReference>
<dbReference type="Reactome" id="R-HSA-5676590">
    <property type="pathway name" value="NIK--&gt;noncanonical NF-kB signaling"/>
</dbReference>
<dbReference type="Reactome" id="R-HSA-5678895">
    <property type="pathway name" value="Defective CFTR causes cystic fibrosis"/>
</dbReference>
<dbReference type="Reactome" id="R-HSA-5687128">
    <property type="pathway name" value="MAPK6/MAPK4 signaling"/>
</dbReference>
<dbReference type="Reactome" id="R-HSA-5689603">
    <property type="pathway name" value="UCH proteinases"/>
</dbReference>
<dbReference type="Reactome" id="R-HSA-5689880">
    <property type="pathway name" value="Ub-specific processing proteases"/>
</dbReference>
<dbReference type="Reactome" id="R-HSA-68867">
    <property type="pathway name" value="Assembly of the pre-replicative complex"/>
</dbReference>
<dbReference type="Reactome" id="R-HSA-68949">
    <property type="pathway name" value="Orc1 removal from chromatin"/>
</dbReference>
<dbReference type="Reactome" id="R-HSA-69017">
    <property type="pathway name" value="CDK-mediated phosphorylation and removal of Cdc6"/>
</dbReference>
<dbReference type="Reactome" id="R-HSA-69481">
    <property type="pathway name" value="G2/M Checkpoints"/>
</dbReference>
<dbReference type="Reactome" id="R-HSA-69601">
    <property type="pathway name" value="Ubiquitin Mediated Degradation of Phosphorylated Cdc25A"/>
</dbReference>
<dbReference type="Reactome" id="R-HSA-75815">
    <property type="pathway name" value="Ubiquitin-dependent degradation of Cyclin D"/>
</dbReference>
<dbReference type="Reactome" id="R-HSA-8852276">
    <property type="pathway name" value="The role of GTSE1 in G2/M progression after G2 checkpoint"/>
</dbReference>
<dbReference type="Reactome" id="R-HSA-8854050">
    <property type="pathway name" value="FBXL7 down-regulates AURKA during mitotic entry and in early mitosis"/>
</dbReference>
<dbReference type="Reactome" id="R-HSA-8939236">
    <property type="pathway name" value="RUNX1 regulates transcription of genes involved in differentiation of HSCs"/>
</dbReference>
<dbReference type="Reactome" id="R-HSA-8939902">
    <property type="pathway name" value="Regulation of RUNX2 expression and activity"/>
</dbReference>
<dbReference type="Reactome" id="R-HSA-8941858">
    <property type="pathway name" value="Regulation of RUNX3 expression and activity"/>
</dbReference>
<dbReference type="Reactome" id="R-HSA-8948751">
    <property type="pathway name" value="Regulation of PTEN stability and activity"/>
</dbReference>
<dbReference type="Reactome" id="R-HSA-8951664">
    <property type="pathway name" value="Neddylation"/>
</dbReference>
<dbReference type="Reactome" id="R-HSA-9010553">
    <property type="pathway name" value="Regulation of expression of SLITs and ROBOs"/>
</dbReference>
<dbReference type="Reactome" id="R-HSA-9020702">
    <property type="pathway name" value="Interleukin-1 signaling"/>
</dbReference>
<dbReference type="Reactome" id="R-HSA-9604323">
    <property type="pathway name" value="Negative regulation of NOTCH4 signaling"/>
</dbReference>
<dbReference type="Reactome" id="R-HSA-9755511">
    <property type="pathway name" value="KEAP1-NFE2L2 pathway"/>
</dbReference>
<dbReference type="Reactome" id="R-HSA-9762114">
    <property type="pathway name" value="GSK3B and BTRC:CUL1-mediated-degradation of NFE2L2"/>
</dbReference>
<dbReference type="Reactome" id="R-HSA-9824272">
    <property type="pathway name" value="Somitogenesis"/>
</dbReference>
<dbReference type="Reactome" id="R-HSA-983168">
    <property type="pathway name" value="Antigen processing: Ubiquitination &amp; Proteasome degradation"/>
</dbReference>
<dbReference type="Reactome" id="R-HSA-9907900">
    <property type="pathway name" value="Proteasome assembly"/>
</dbReference>
<dbReference type="SignaLink" id="P62191"/>
<dbReference type="SIGNOR" id="P62191"/>
<dbReference type="BioGRID-ORCS" id="5700">
    <property type="hits" value="762 hits in 1164 CRISPR screens"/>
</dbReference>
<dbReference type="CD-CODE" id="FB4E32DD">
    <property type="entry name" value="Presynaptic clusters and postsynaptic densities"/>
</dbReference>
<dbReference type="ChiTaRS" id="PSMC1">
    <property type="organism name" value="human"/>
</dbReference>
<dbReference type="GeneWiki" id="PSMC1"/>
<dbReference type="GenomeRNAi" id="5700"/>
<dbReference type="Pharos" id="P62191">
    <property type="development level" value="Tbio"/>
</dbReference>
<dbReference type="PRO" id="PR:P62191"/>
<dbReference type="Proteomes" id="UP000005640">
    <property type="component" value="Chromosome 14"/>
</dbReference>
<dbReference type="RNAct" id="P62191">
    <property type="molecule type" value="protein"/>
</dbReference>
<dbReference type="Bgee" id="ENSG00000100764">
    <property type="expression patterns" value="Expressed in calcaneal tendon and 101 other cell types or tissues"/>
</dbReference>
<dbReference type="ExpressionAtlas" id="P62191">
    <property type="expression patterns" value="baseline and differential"/>
</dbReference>
<dbReference type="GO" id="GO:0005829">
    <property type="term" value="C:cytosol"/>
    <property type="evidence" value="ECO:0000314"/>
    <property type="project" value="HPA"/>
</dbReference>
<dbReference type="GO" id="GO:0016020">
    <property type="term" value="C:membrane"/>
    <property type="evidence" value="ECO:0007005"/>
    <property type="project" value="UniProtKB"/>
</dbReference>
<dbReference type="GO" id="GO:0005654">
    <property type="term" value="C:nucleoplasm"/>
    <property type="evidence" value="ECO:0000314"/>
    <property type="project" value="HPA"/>
</dbReference>
<dbReference type="GO" id="GO:0005634">
    <property type="term" value="C:nucleus"/>
    <property type="evidence" value="ECO:0007005"/>
    <property type="project" value="UniProtKB"/>
</dbReference>
<dbReference type="GO" id="GO:0022624">
    <property type="term" value="C:proteasome accessory complex"/>
    <property type="evidence" value="ECO:0000250"/>
    <property type="project" value="UniProtKB"/>
</dbReference>
<dbReference type="GO" id="GO:0000502">
    <property type="term" value="C:proteasome complex"/>
    <property type="evidence" value="ECO:0000314"/>
    <property type="project" value="UniProtKB"/>
</dbReference>
<dbReference type="GO" id="GO:0008540">
    <property type="term" value="C:proteasome regulatory particle, base subcomplex"/>
    <property type="evidence" value="ECO:0000318"/>
    <property type="project" value="GO_Central"/>
</dbReference>
<dbReference type="GO" id="GO:0005524">
    <property type="term" value="F:ATP binding"/>
    <property type="evidence" value="ECO:0007669"/>
    <property type="project" value="UniProtKB-KW"/>
</dbReference>
<dbReference type="GO" id="GO:0016887">
    <property type="term" value="F:ATP hydrolysis activity"/>
    <property type="evidence" value="ECO:0007669"/>
    <property type="project" value="InterPro"/>
</dbReference>
<dbReference type="GO" id="GO:0036402">
    <property type="term" value="F:proteasome-activating activity"/>
    <property type="evidence" value="ECO:0000250"/>
    <property type="project" value="UniProtKB"/>
</dbReference>
<dbReference type="GO" id="GO:0003723">
    <property type="term" value="F:RNA binding"/>
    <property type="evidence" value="ECO:0007005"/>
    <property type="project" value="UniProtKB"/>
</dbReference>
<dbReference type="GO" id="GO:0043161">
    <property type="term" value="P:proteasome-mediated ubiquitin-dependent protein catabolic process"/>
    <property type="evidence" value="ECO:0000318"/>
    <property type="project" value="GO_Central"/>
</dbReference>
<dbReference type="CDD" id="cd19502">
    <property type="entry name" value="RecA-like_PAN_like"/>
    <property type="match status" value="1"/>
</dbReference>
<dbReference type="FunFam" id="2.40.50.140:FF:000067">
    <property type="entry name" value="26S protease regulatory subunit 4"/>
    <property type="match status" value="1"/>
</dbReference>
<dbReference type="FunFam" id="1.10.8.60:FF:000007">
    <property type="entry name" value="26S proteasome regulatory subunit 4"/>
    <property type="match status" value="1"/>
</dbReference>
<dbReference type="FunFam" id="3.40.50.300:FF:000039">
    <property type="entry name" value="26S proteasome regulatory subunit 4"/>
    <property type="match status" value="1"/>
</dbReference>
<dbReference type="Gene3D" id="1.10.8.60">
    <property type="match status" value="1"/>
</dbReference>
<dbReference type="Gene3D" id="2.40.50.140">
    <property type="entry name" value="Nucleic acid-binding proteins"/>
    <property type="match status" value="1"/>
</dbReference>
<dbReference type="Gene3D" id="3.40.50.300">
    <property type="entry name" value="P-loop containing nucleotide triphosphate hydrolases"/>
    <property type="match status" value="1"/>
</dbReference>
<dbReference type="InterPro" id="IPR050221">
    <property type="entry name" value="26S_Proteasome_ATPase"/>
</dbReference>
<dbReference type="InterPro" id="IPR003593">
    <property type="entry name" value="AAA+_ATPase"/>
</dbReference>
<dbReference type="InterPro" id="IPR041569">
    <property type="entry name" value="AAA_lid_3"/>
</dbReference>
<dbReference type="InterPro" id="IPR003959">
    <property type="entry name" value="ATPase_AAA_core"/>
</dbReference>
<dbReference type="InterPro" id="IPR003960">
    <property type="entry name" value="ATPase_AAA_CS"/>
</dbReference>
<dbReference type="InterPro" id="IPR012340">
    <property type="entry name" value="NA-bd_OB-fold"/>
</dbReference>
<dbReference type="InterPro" id="IPR027417">
    <property type="entry name" value="P-loop_NTPase"/>
</dbReference>
<dbReference type="InterPro" id="IPR032501">
    <property type="entry name" value="Prot_ATP_ID_OB_2nd"/>
</dbReference>
<dbReference type="PANTHER" id="PTHR23073">
    <property type="entry name" value="26S PROTEASOME REGULATORY SUBUNIT"/>
    <property type="match status" value="1"/>
</dbReference>
<dbReference type="Pfam" id="PF00004">
    <property type="entry name" value="AAA"/>
    <property type="match status" value="1"/>
</dbReference>
<dbReference type="Pfam" id="PF17862">
    <property type="entry name" value="AAA_lid_3"/>
    <property type="match status" value="1"/>
</dbReference>
<dbReference type="Pfam" id="PF16450">
    <property type="entry name" value="Prot_ATP_ID_OB_C"/>
    <property type="match status" value="1"/>
</dbReference>
<dbReference type="SMART" id="SM00382">
    <property type="entry name" value="AAA"/>
    <property type="match status" value="1"/>
</dbReference>
<dbReference type="SUPFAM" id="SSF52540">
    <property type="entry name" value="P-loop containing nucleoside triphosphate hydrolases"/>
    <property type="match status" value="1"/>
</dbReference>
<dbReference type="PROSITE" id="PS00674">
    <property type="entry name" value="AAA"/>
    <property type="match status" value="1"/>
</dbReference>
<organism>
    <name type="scientific">Homo sapiens</name>
    <name type="common">Human</name>
    <dbReference type="NCBI Taxonomy" id="9606"/>
    <lineage>
        <taxon>Eukaryota</taxon>
        <taxon>Metazoa</taxon>
        <taxon>Chordata</taxon>
        <taxon>Craniata</taxon>
        <taxon>Vertebrata</taxon>
        <taxon>Euteleostomi</taxon>
        <taxon>Mammalia</taxon>
        <taxon>Eutheria</taxon>
        <taxon>Euarchontoglires</taxon>
        <taxon>Primates</taxon>
        <taxon>Haplorrhini</taxon>
        <taxon>Catarrhini</taxon>
        <taxon>Hominidae</taxon>
        <taxon>Homo</taxon>
    </lineage>
</organism>
<proteinExistence type="evidence at protein level"/>
<keyword id="KW-0002">3D-structure</keyword>
<keyword id="KW-0007">Acetylation</keyword>
<keyword id="KW-0025">Alternative splicing</keyword>
<keyword id="KW-0067">ATP-binding</keyword>
<keyword id="KW-0963">Cytoplasm</keyword>
<keyword id="KW-0209">Deafness</keyword>
<keyword id="KW-0903">Direct protein sequencing</keyword>
<keyword id="KW-0991">Intellectual disability</keyword>
<keyword id="KW-1017">Isopeptide bond</keyword>
<keyword id="KW-0449">Lipoprotein</keyword>
<keyword id="KW-0472">Membrane</keyword>
<keyword id="KW-0519">Myristate</keyword>
<keyword id="KW-0547">Nucleotide-binding</keyword>
<keyword id="KW-0539">Nucleus</keyword>
<keyword id="KW-0597">Phosphoprotein</keyword>
<keyword id="KW-0647">Proteasome</keyword>
<keyword id="KW-1267">Proteomics identification</keyword>
<keyword id="KW-1185">Reference proteome</keyword>
<keyword id="KW-0832">Ubl conjugation</keyword>
<gene>
    <name type="primary">PSMC1</name>
</gene>
<reference key="1">
    <citation type="journal article" date="1992" name="J. Biol. Chem.">
        <title>Subunit 4 of the 26 S protease is a member of a novel eukaryotic ATPase family.</title>
        <authorList>
            <person name="Dubiel W."/>
            <person name="Ferrell K."/>
            <person name="Pratt G."/>
            <person name="Rechsteiner M.C."/>
        </authorList>
    </citation>
    <scope>NUCLEOTIDE SEQUENCE [MRNA] (ISOFORM 1)</scope>
    <scope>PARTIAL PROTEIN SEQUENCE</scope>
</reference>
<reference key="2">
    <citation type="journal article" date="2004" name="Nat. Genet.">
        <title>Complete sequencing and characterization of 21,243 full-length human cDNAs.</title>
        <authorList>
            <person name="Ota T."/>
            <person name="Suzuki Y."/>
            <person name="Nishikawa T."/>
            <person name="Otsuki T."/>
            <person name="Sugiyama T."/>
            <person name="Irie R."/>
            <person name="Wakamatsu A."/>
            <person name="Hayashi K."/>
            <person name="Sato H."/>
            <person name="Nagai K."/>
            <person name="Kimura K."/>
            <person name="Makita H."/>
            <person name="Sekine M."/>
            <person name="Obayashi M."/>
            <person name="Nishi T."/>
            <person name="Shibahara T."/>
            <person name="Tanaka T."/>
            <person name="Ishii S."/>
            <person name="Yamamoto J."/>
            <person name="Saito K."/>
            <person name="Kawai Y."/>
            <person name="Isono Y."/>
            <person name="Nakamura Y."/>
            <person name="Nagahari K."/>
            <person name="Murakami K."/>
            <person name="Yasuda T."/>
            <person name="Iwayanagi T."/>
            <person name="Wagatsuma M."/>
            <person name="Shiratori A."/>
            <person name="Sudo H."/>
            <person name="Hosoiri T."/>
            <person name="Kaku Y."/>
            <person name="Kodaira H."/>
            <person name="Kondo H."/>
            <person name="Sugawara M."/>
            <person name="Takahashi M."/>
            <person name="Kanda K."/>
            <person name="Yokoi T."/>
            <person name="Furuya T."/>
            <person name="Kikkawa E."/>
            <person name="Omura Y."/>
            <person name="Abe K."/>
            <person name="Kamihara K."/>
            <person name="Katsuta N."/>
            <person name="Sato K."/>
            <person name="Tanikawa M."/>
            <person name="Yamazaki M."/>
            <person name="Ninomiya K."/>
            <person name="Ishibashi T."/>
            <person name="Yamashita H."/>
            <person name="Murakawa K."/>
            <person name="Fujimori K."/>
            <person name="Tanai H."/>
            <person name="Kimata M."/>
            <person name="Watanabe M."/>
            <person name="Hiraoka S."/>
            <person name="Chiba Y."/>
            <person name="Ishida S."/>
            <person name="Ono Y."/>
            <person name="Takiguchi S."/>
            <person name="Watanabe S."/>
            <person name="Yosida M."/>
            <person name="Hotuta T."/>
            <person name="Kusano J."/>
            <person name="Kanehori K."/>
            <person name="Takahashi-Fujii A."/>
            <person name="Hara H."/>
            <person name="Tanase T.-O."/>
            <person name="Nomura Y."/>
            <person name="Togiya S."/>
            <person name="Komai F."/>
            <person name="Hara R."/>
            <person name="Takeuchi K."/>
            <person name="Arita M."/>
            <person name="Imose N."/>
            <person name="Musashino K."/>
            <person name="Yuuki H."/>
            <person name="Oshima A."/>
            <person name="Sasaki N."/>
            <person name="Aotsuka S."/>
            <person name="Yoshikawa Y."/>
            <person name="Matsunawa H."/>
            <person name="Ichihara T."/>
            <person name="Shiohata N."/>
            <person name="Sano S."/>
            <person name="Moriya S."/>
            <person name="Momiyama H."/>
            <person name="Satoh N."/>
            <person name="Takami S."/>
            <person name="Terashima Y."/>
            <person name="Suzuki O."/>
            <person name="Nakagawa S."/>
            <person name="Senoh A."/>
            <person name="Mizoguchi H."/>
            <person name="Goto Y."/>
            <person name="Shimizu F."/>
            <person name="Wakebe H."/>
            <person name="Hishigaki H."/>
            <person name="Watanabe T."/>
            <person name="Sugiyama A."/>
            <person name="Takemoto M."/>
            <person name="Kawakami B."/>
            <person name="Yamazaki M."/>
            <person name="Watanabe K."/>
            <person name="Kumagai A."/>
            <person name="Itakura S."/>
            <person name="Fukuzumi Y."/>
            <person name="Fujimori Y."/>
            <person name="Komiyama M."/>
            <person name="Tashiro H."/>
            <person name="Tanigami A."/>
            <person name="Fujiwara T."/>
            <person name="Ono T."/>
            <person name="Yamada K."/>
            <person name="Fujii Y."/>
            <person name="Ozaki K."/>
            <person name="Hirao M."/>
            <person name="Ohmori Y."/>
            <person name="Kawabata A."/>
            <person name="Hikiji T."/>
            <person name="Kobatake N."/>
            <person name="Inagaki H."/>
            <person name="Ikema Y."/>
            <person name="Okamoto S."/>
            <person name="Okitani R."/>
            <person name="Kawakami T."/>
            <person name="Noguchi S."/>
            <person name="Itoh T."/>
            <person name="Shigeta K."/>
            <person name="Senba T."/>
            <person name="Matsumura K."/>
            <person name="Nakajima Y."/>
            <person name="Mizuno T."/>
            <person name="Morinaga M."/>
            <person name="Sasaki M."/>
            <person name="Togashi T."/>
            <person name="Oyama M."/>
            <person name="Hata H."/>
            <person name="Watanabe M."/>
            <person name="Komatsu T."/>
            <person name="Mizushima-Sugano J."/>
            <person name="Satoh T."/>
            <person name="Shirai Y."/>
            <person name="Takahashi Y."/>
            <person name="Nakagawa K."/>
            <person name="Okumura K."/>
            <person name="Nagase T."/>
            <person name="Nomura N."/>
            <person name="Kikuchi H."/>
            <person name="Masuho Y."/>
            <person name="Yamashita R."/>
            <person name="Nakai K."/>
            <person name="Yada T."/>
            <person name="Nakamura Y."/>
            <person name="Ohara O."/>
            <person name="Isogai T."/>
            <person name="Sugano S."/>
        </authorList>
    </citation>
    <scope>NUCLEOTIDE SEQUENCE [LARGE SCALE MRNA] (ISOFORM 2)</scope>
</reference>
<reference key="3">
    <citation type="submission" date="2004-06" db="EMBL/GenBank/DDBJ databases">
        <title>Cloning of human full open reading frames in Gateway(TM) system entry vector (pDONR201).</title>
        <authorList>
            <person name="Ebert L."/>
            <person name="Schick M."/>
            <person name="Neubert P."/>
            <person name="Schatten R."/>
            <person name="Henze S."/>
            <person name="Korn B."/>
        </authorList>
    </citation>
    <scope>NUCLEOTIDE SEQUENCE [LARGE SCALE MRNA] (ISOFORM 1)</scope>
</reference>
<reference key="4">
    <citation type="journal article" date="2003" name="Nature">
        <title>The DNA sequence and analysis of human chromosome 14.</title>
        <authorList>
            <person name="Heilig R."/>
            <person name="Eckenberg R."/>
            <person name="Petit J.-L."/>
            <person name="Fonknechten N."/>
            <person name="Da Silva C."/>
            <person name="Cattolico L."/>
            <person name="Levy M."/>
            <person name="Barbe V."/>
            <person name="De Berardinis V."/>
            <person name="Ureta-Vidal A."/>
            <person name="Pelletier E."/>
            <person name="Vico V."/>
            <person name="Anthouard V."/>
            <person name="Rowen L."/>
            <person name="Madan A."/>
            <person name="Qin S."/>
            <person name="Sun H."/>
            <person name="Du H."/>
            <person name="Pepin K."/>
            <person name="Artiguenave F."/>
            <person name="Robert C."/>
            <person name="Cruaud C."/>
            <person name="Bruels T."/>
            <person name="Jaillon O."/>
            <person name="Friedlander L."/>
            <person name="Samson G."/>
            <person name="Brottier P."/>
            <person name="Cure S."/>
            <person name="Segurens B."/>
            <person name="Aniere F."/>
            <person name="Samain S."/>
            <person name="Crespeau H."/>
            <person name="Abbasi N."/>
            <person name="Aiach N."/>
            <person name="Boscus D."/>
            <person name="Dickhoff R."/>
            <person name="Dors M."/>
            <person name="Dubois I."/>
            <person name="Friedman C."/>
            <person name="Gouyvenoux M."/>
            <person name="James R."/>
            <person name="Madan A."/>
            <person name="Mairey-Estrada B."/>
            <person name="Mangenot S."/>
            <person name="Martins N."/>
            <person name="Menard M."/>
            <person name="Oztas S."/>
            <person name="Ratcliffe A."/>
            <person name="Shaffer T."/>
            <person name="Trask B."/>
            <person name="Vacherie B."/>
            <person name="Bellemere C."/>
            <person name="Belser C."/>
            <person name="Besnard-Gonnet M."/>
            <person name="Bartol-Mavel D."/>
            <person name="Boutard M."/>
            <person name="Briez-Silla S."/>
            <person name="Combette S."/>
            <person name="Dufosse-Laurent V."/>
            <person name="Ferron C."/>
            <person name="Lechaplais C."/>
            <person name="Louesse C."/>
            <person name="Muselet D."/>
            <person name="Magdelenat G."/>
            <person name="Pateau E."/>
            <person name="Petit E."/>
            <person name="Sirvain-Trukniewicz P."/>
            <person name="Trybou A."/>
            <person name="Vega-Czarny N."/>
            <person name="Bataille E."/>
            <person name="Bluet E."/>
            <person name="Bordelais I."/>
            <person name="Dubois M."/>
            <person name="Dumont C."/>
            <person name="Guerin T."/>
            <person name="Haffray S."/>
            <person name="Hammadi R."/>
            <person name="Muanga J."/>
            <person name="Pellouin V."/>
            <person name="Robert D."/>
            <person name="Wunderle E."/>
            <person name="Gauguet G."/>
            <person name="Roy A."/>
            <person name="Sainte-Marthe L."/>
            <person name="Verdier J."/>
            <person name="Verdier-Discala C."/>
            <person name="Hillier L.W."/>
            <person name="Fulton L."/>
            <person name="McPherson J."/>
            <person name="Matsuda F."/>
            <person name="Wilson R."/>
            <person name="Scarpelli C."/>
            <person name="Gyapay G."/>
            <person name="Wincker P."/>
            <person name="Saurin W."/>
            <person name="Quetier F."/>
            <person name="Waterston R."/>
            <person name="Hood L."/>
            <person name="Weissenbach J."/>
        </authorList>
    </citation>
    <scope>NUCLEOTIDE SEQUENCE [LARGE SCALE GENOMIC DNA]</scope>
</reference>
<reference key="5">
    <citation type="journal article" date="2004" name="Genome Res.">
        <title>The status, quality, and expansion of the NIH full-length cDNA project: the Mammalian Gene Collection (MGC).</title>
        <authorList>
            <consortium name="The MGC Project Team"/>
        </authorList>
    </citation>
    <scope>NUCLEOTIDE SEQUENCE [LARGE SCALE MRNA] (ISOFORM 1)</scope>
    <source>
        <tissue>Bone marrow</tissue>
        <tissue>Brain</tissue>
        <tissue>Lung</tissue>
        <tissue>Prostate</tissue>
    </source>
</reference>
<reference key="6">
    <citation type="journal article" date="1992" name="Eur. J. Biochem.">
        <title>Demonstration that a human 26S proteolytic complex consists of a proteasome and multiple associated protein components and hydrolyzes ATP and ubiquitin-ligated proteins by closely linked mechanisms.</title>
        <authorList>
            <person name="Kanayama H.O."/>
            <person name="Tamura T."/>
            <person name="Ugai S."/>
            <person name="Kagawa S."/>
            <person name="Tanahashi N."/>
            <person name="Yoshimura T."/>
            <person name="Tanaka K."/>
            <person name="Ichihara A."/>
        </authorList>
    </citation>
    <scope>FUNCTION</scope>
</reference>
<reference key="7">
    <citation type="journal article" date="2001" name="Hum. Mol. Genet.">
        <title>Association of ataxin-7 with the proteasome subunit S4 of the 19S regulatory complex.</title>
        <authorList>
            <person name="Matilla A."/>
            <person name="Gorbea C."/>
            <person name="Einum D.D."/>
            <person name="Townsend J."/>
            <person name="Michalik A."/>
            <person name="van Broeckhoven C."/>
            <person name="Jensen C.C."/>
            <person name="Murphy K.J."/>
            <person name="Ptacek L.J."/>
            <person name="Fu Y.H."/>
        </authorList>
    </citation>
    <scope>INTERACTION WITH SCA7</scope>
</reference>
<reference key="8">
    <citation type="journal article" date="2004" name="Anal. Chem.">
        <title>Robust phosphoproteomic profiling of tyrosine phosphorylation sites from human T cells using immobilized metal affinity chromatography and tandem mass spectrometry.</title>
        <authorList>
            <person name="Brill L.M."/>
            <person name="Salomon A.R."/>
            <person name="Ficarro S.B."/>
            <person name="Mukherji M."/>
            <person name="Stettler-Gill M."/>
            <person name="Peters E.C."/>
        </authorList>
    </citation>
    <scope>PHOSPHORYLATION [LARGE SCALE ANALYSIS] AT TYR-439</scope>
    <scope>IDENTIFICATION BY MASS SPECTROMETRY [LARGE SCALE ANALYSIS]</scope>
    <source>
        <tissue>Leukemic T-cell</tissue>
    </source>
</reference>
<reference key="9">
    <citation type="journal article" date="2004" name="Proc. Natl. Acad. Sci. U.S.A.">
        <title>A complex between peptide:N-glycanase and two proteasome-linked proteins suggests a mechanism for the degradation of misfolded glycoproteins.</title>
        <authorList>
            <person name="Katiyar S."/>
            <person name="Li G."/>
            <person name="Lennarz W.J."/>
        </authorList>
    </citation>
    <scope>INTERACTION WITH NGLY1</scope>
</reference>
<reference key="10">
    <citation type="journal article" date="2005" name="Mol. Cell. Biol.">
        <title>Proteasomal ATPase-associated factor 1 negatively regulates proteasome activity by interacting with proteasomal ATPases.</title>
        <authorList>
            <person name="Park Y."/>
            <person name="Hwang Y.-P."/>
            <person name="Lee J.-S."/>
            <person name="Seo S.-H."/>
            <person name="Yoon S.K."/>
            <person name="Yoon J.-B."/>
        </authorList>
    </citation>
    <scope>INTERACTION WITH PAAF1</scope>
</reference>
<reference key="11">
    <citation type="journal article" date="2007" name="Biochemistry">
        <title>Mass spectrometric characterization of the affinity-purified human 26S proteasome complex.</title>
        <authorList>
            <person name="Wang X."/>
            <person name="Chen C.-F."/>
            <person name="Baker P.R."/>
            <person name="Chen P.-L."/>
            <person name="Kaiser P."/>
            <person name="Huang L."/>
        </authorList>
    </citation>
    <scope>IDENTIFICATION BY MASS SPECTROMETRY [LARGE SCALE ANALYSIS]</scope>
    <source>
        <tissue>Embryonic kidney</tissue>
    </source>
</reference>
<reference key="12">
    <citation type="journal article" date="2007" name="Proteomics">
        <title>Tryptic digestion of ubiquitin standards reveals an improved strategy for identifying ubiquitinated proteins by mass spectrometry.</title>
        <authorList>
            <person name="Denis N.J."/>
            <person name="Vasilescu J."/>
            <person name="Lambert J.-P."/>
            <person name="Smith J.C."/>
            <person name="Figeys D."/>
        </authorList>
    </citation>
    <scope>UBIQUITINATION [LARGE SCALE ANALYSIS] AT LYS-237</scope>
    <scope>IDENTIFICATION BY MASS SPECTROMETRY</scope>
    <source>
        <tissue>Mammary cancer</tissue>
    </source>
</reference>
<reference key="13">
    <citation type="journal article" date="2009" name="Sci. Signal.">
        <title>Quantitative phosphoproteomic analysis of T cell receptor signaling reveals system-wide modulation of protein-protein interactions.</title>
        <authorList>
            <person name="Mayya V."/>
            <person name="Lundgren D.H."/>
            <person name="Hwang S.-I."/>
            <person name="Rezaul K."/>
            <person name="Wu L."/>
            <person name="Eng J.K."/>
            <person name="Rodionov V."/>
            <person name="Han D.K."/>
        </authorList>
    </citation>
    <scope>PHOSPHORYLATION [LARGE SCALE ANALYSIS] AT SER-4</scope>
    <scope>IDENTIFICATION BY MASS SPECTROMETRY [LARGE SCALE ANALYSIS]</scope>
    <source>
        <tissue>Leukemic T-cell</tissue>
    </source>
</reference>
<reference key="14">
    <citation type="journal article" date="2009" name="Science">
        <title>Lysine acetylation targets protein complexes and co-regulates major cellular functions.</title>
        <authorList>
            <person name="Choudhary C."/>
            <person name="Kumar C."/>
            <person name="Gnad F."/>
            <person name="Nielsen M.L."/>
            <person name="Rehman M."/>
            <person name="Walther T.C."/>
            <person name="Olsen J.V."/>
            <person name="Mann M."/>
        </authorList>
    </citation>
    <scope>ACETYLATION [LARGE SCALE ANALYSIS] AT LYS-258</scope>
    <scope>IDENTIFICATION BY MASS SPECTROMETRY [LARGE SCALE ANALYSIS]</scope>
</reference>
<reference key="15">
    <citation type="journal article" date="2011" name="BMC Syst. Biol.">
        <title>Initial characterization of the human central proteome.</title>
        <authorList>
            <person name="Burkard T.R."/>
            <person name="Planyavsky M."/>
            <person name="Kaupe I."/>
            <person name="Breitwieser F.P."/>
            <person name="Buerckstuemmer T."/>
            <person name="Bennett K.L."/>
            <person name="Superti-Furga G."/>
            <person name="Colinge J."/>
        </authorList>
    </citation>
    <scope>IDENTIFICATION BY MASS SPECTROMETRY [LARGE SCALE ANALYSIS]</scope>
</reference>
<reference key="16">
    <citation type="journal article" date="2012" name="Mol. Cell. Proteomics">
        <title>Comparative large-scale characterisation of plant vs. mammal proteins reveals similar and idiosyncratic N-alpha acetylation features.</title>
        <authorList>
            <person name="Bienvenut W.V."/>
            <person name="Sumpton D."/>
            <person name="Martinez A."/>
            <person name="Lilla S."/>
            <person name="Espagne C."/>
            <person name="Meinnel T."/>
            <person name="Giglione C."/>
        </authorList>
    </citation>
    <scope>MYRISTOYLATION AT GLY-2</scope>
    <scope>CLEAVAGE OF INITIATOR METHIONINE [LARGE SCALE ANALYSIS]</scope>
    <scope>IDENTIFICATION BY MASS SPECTROMETRY [LARGE SCALE ANALYSIS]</scope>
</reference>
<reference key="17">
    <citation type="journal article" date="2013" name="J. Proteome Res.">
        <title>Toward a comprehensive characterization of a human cancer cell phosphoproteome.</title>
        <authorList>
            <person name="Zhou H."/>
            <person name="Di Palma S."/>
            <person name="Preisinger C."/>
            <person name="Peng M."/>
            <person name="Polat A.N."/>
            <person name="Heck A.J."/>
            <person name="Mohammed S."/>
        </authorList>
    </citation>
    <scope>PHOSPHORYLATION [LARGE SCALE ANALYSIS] AT THR-53 AND THR-434</scope>
    <scope>IDENTIFICATION BY MASS SPECTROMETRY [LARGE SCALE ANALYSIS]</scope>
    <source>
        <tissue>Erythroleukemia</tissue>
    </source>
</reference>
<reference key="18">
    <citation type="journal article" date="2014" name="J. Proteomics">
        <title>An enzyme assisted RP-RPLC approach for in-depth analysis of human liver phosphoproteome.</title>
        <authorList>
            <person name="Bian Y."/>
            <person name="Song C."/>
            <person name="Cheng K."/>
            <person name="Dong M."/>
            <person name="Wang F."/>
            <person name="Huang J."/>
            <person name="Sun D."/>
            <person name="Wang L."/>
            <person name="Ye M."/>
            <person name="Zou H."/>
        </authorList>
    </citation>
    <scope>PHOSPHORYLATION [LARGE SCALE ANALYSIS] AT THR-53</scope>
    <scope>IDENTIFICATION BY MASS SPECTROMETRY [LARGE SCALE ANALYSIS]</scope>
    <source>
        <tissue>Liver</tissue>
    </source>
</reference>
<reference key="19">
    <citation type="journal article" date="2014" name="Nat. Commun.">
        <title>Global profiling of co- and post-translationally N-myristoylated proteomes in human cells.</title>
        <authorList>
            <person name="Thinon E."/>
            <person name="Serwa R.A."/>
            <person name="Broncel M."/>
            <person name="Brannigan J.A."/>
            <person name="Brassat U."/>
            <person name="Wright M.H."/>
            <person name="Heal W.P."/>
            <person name="Wilkinson A.J."/>
            <person name="Mann D.J."/>
            <person name="Tate E.W."/>
        </authorList>
    </citation>
    <scope>MYRISTOYLATION AT GLY-2</scope>
    <scope>CLEAVAGE OF INITIATOR METHIONINE</scope>
    <scope>IDENTIFICATION BY MASS SPECTROMETRY</scope>
</reference>
<reference key="20">
    <citation type="journal article" date="2015" name="Angew. Chem. Int. Ed.">
        <title>Multifunctional reagents for quantitative proteome-wide analysis of protein modification in human cells and dynamic profiling of protein lipidation during vertebrate development.</title>
        <authorList>
            <person name="Broncel M."/>
            <person name="Serwa R.A."/>
            <person name="Ciepla P."/>
            <person name="Krause E."/>
            <person name="Dallman M.J."/>
            <person name="Magee A.I."/>
            <person name="Tate E.W."/>
        </authorList>
    </citation>
    <scope>MYRISTOYLATION AT GLY-2</scope>
    <scope>CLEAVAGE OF INITIATOR METHIONINE</scope>
    <scope>IDENTIFICATION BY MASS SPECTROMETRY</scope>
</reference>
<reference key="21">
    <citation type="journal article" date="2016" name="Nat. Struct. Mol. Biol.">
        <title>An atomic structure of the human 26S proteasome.</title>
        <authorList>
            <person name="Huang X."/>
            <person name="Luan B."/>
            <person name="Wu J."/>
            <person name="Shi Y."/>
        </authorList>
    </citation>
    <scope>STRUCTURE BY ELECTRON MICROSCOPY (3.50 ANGSTROMS) OF 1-440</scope>
    <scope>SUBUNIT</scope>
</reference>
<reference key="22">
    <citation type="journal article" date="2016" name="Proc. Natl. Acad. Sci. U.S.A.">
        <title>Structure of the human 26S proteasome at a resolution of 3.9 Aa.</title>
        <authorList>
            <person name="Schweitzer A."/>
            <person name="Aufderheide A."/>
            <person name="Rudack T."/>
            <person name="Beck F."/>
            <person name="Pfeifer G."/>
            <person name="Plitzko J.M."/>
            <person name="Sakata E."/>
            <person name="Schulten K."/>
            <person name="Foerster F."/>
            <person name="Baumeister W."/>
        </authorList>
    </citation>
    <scope>STRUCTURE BY ELECTRON MICROSCOPY (4.02 ANGSTROMS) OF 1-440</scope>
    <scope>SUBUNIT</scope>
</reference>
<reference key="23">
    <citation type="journal article" date="2022" name="Clin. Genet.">
        <title>PSMC1 variant causes a novel neurological syndrome.</title>
        <authorList>
            <person name="Aharoni S."/>
            <person name="Proskorovski-Ohayon R."/>
            <person name="Krishnan R.K."/>
            <person name="Yogev Y."/>
            <person name="Wormser O."/>
            <person name="Hadar N."/>
            <person name="Bakhrat A."/>
            <person name="Alshafee I."/>
            <person name="Gombosh M."/>
            <person name="Agam N."/>
            <person name="Gradstein L."/>
            <person name="Shorer Z."/>
            <person name="Zarivach R."/>
            <person name="Eskin-Schwartz M."/>
            <person name="Abdu U."/>
            <person name="Birk O.S."/>
        </authorList>
    </citation>
    <scope>VARIANT BKAH THR-328</scope>
    <scope>CHARACTERIZATION OF VARIANT BKAH THR-328</scope>
    <scope>INVOLVEMENT IN BKAH</scope>
</reference>
<evidence type="ECO:0000255" key="1"/>
<evidence type="ECO:0000256" key="2">
    <source>
        <dbReference type="SAM" id="MobiDB-lite"/>
    </source>
</evidence>
<evidence type="ECO:0000269" key="3">
    <source>
    </source>
</evidence>
<evidence type="ECO:0000269" key="4">
    <source>
    </source>
</evidence>
<evidence type="ECO:0000269" key="5">
    <source>
    </source>
</evidence>
<evidence type="ECO:0000269" key="6">
    <source>
    </source>
</evidence>
<evidence type="ECO:0000269" key="7">
    <source>
    </source>
</evidence>
<evidence type="ECO:0000269" key="8">
    <source>
    </source>
</evidence>
<evidence type="ECO:0000269" key="9">
    <source>
    </source>
</evidence>
<evidence type="ECO:0000269" key="10">
    <source>
    </source>
</evidence>
<evidence type="ECO:0000269" key="11">
    <source>
    </source>
</evidence>
<evidence type="ECO:0000269" key="12">
    <source>
    </source>
</evidence>
<evidence type="ECO:0000269" key="13">
    <source>
    </source>
</evidence>
<evidence type="ECO:0000303" key="14">
    <source>
    </source>
</evidence>
<evidence type="ECO:0000305" key="15"/>
<evidence type="ECO:0007744" key="16">
    <source>
    </source>
</evidence>
<evidence type="ECO:0007744" key="17">
    <source>
    </source>
</evidence>
<evidence type="ECO:0007744" key="18">
    <source>
    </source>
</evidence>
<evidence type="ECO:0007744" key="19">
    <source>
    </source>
</evidence>
<evidence type="ECO:0007744" key="20">
    <source>
    </source>
</evidence>
<evidence type="ECO:0007744" key="21">
    <source>
    </source>
</evidence>
<evidence type="ECO:0007829" key="22">
    <source>
        <dbReference type="PDB" id="9E8J"/>
    </source>
</evidence>
<sequence length="440" mass="49185">MGQSQSGGHGPGGGKKDDKDKKKKYEPPVPTRVGKKKKKTKGPDAASKLPLVTPHTQCRLKLLKLERIKDYLLMEEEFIRNQEQMKPLEEKQEEERSKVDDLRGTPMSVGTLEEIIDDNHAIVSTSVGSEHYVSILSFVDKDLLEPGCSVLLNHKVHAVIGVLMDDTDPLVTVMKVEKAPQETYADIGGLDNQIQEIKESVELPLTHPEYYEEMGIKPPKGVILYGPPGTGKTLLAKAVANQTSATFLRVVGSELIQKYLGDGPKLVRELFRVAEEHAPSIVFIDEIDAIGTKRYDSNSGGEREIQRTMLELLNQLDGFDSRGDVKVIMATNRIETLDPALIRPGRIDRKIEFPLPDEKTKKRIFQIHTSRMTLADDVTLDDLIMAKDDLSGADIKAICTEAGLMALRERRMKVTNEDFKKSKENVLYKKQEGTPEGLYL</sequence>
<comment type="function">
    <text evidence="4">Component of the 26S proteasome, a multiprotein complex involved in the ATP-dependent degradation of ubiquitinated proteins. This complex plays a key role in the maintenance of protein homeostasis by removing misfolded or damaged proteins, which could impair cellular functions, and by removing proteins whose functions are no longer required. Therefore, the proteasome participates in numerous cellular processes, including cell cycle progression, apoptosis, or DNA damage repair. PSMC1 belongs to the heterohexameric ring of AAA (ATPases associated with diverse cellular activities) proteins that unfolds ubiquitinated target proteins that are concurrently translocated into a proteolytic chamber and degraded into peptides.</text>
</comment>
<comment type="subunit">
    <text evidence="3 5 6 11 12">Component of the 19S proteasome regulatory particle complex. The 26S proteasome consists of a 20S core particle (CP) and two 19S regulatory subunits (RP). The regulatory particle is made of a lid composed of 9 subunits, a base containing 6 ATPases including PSMC1 and few additional components (PubMed:27342858, PubMed:27428775). Interacts with SCA7 (PubMed:11734547). Interacts with NGLY1 (PubMed:15358861). Interacts with PAAF1 (PubMed:15831487).</text>
</comment>
<comment type="interaction">
    <interactant intactId="EBI-357598">
        <id>P62191</id>
    </interactant>
    <interactant intactId="EBI-710124">
        <id>O60341</id>
        <label>KDM1A</label>
    </interactant>
    <organismsDiffer>false</organismsDiffer>
    <experiments>2</experiments>
</comment>
<comment type="interaction">
    <interactant intactId="EBI-357598">
        <id>P62191</id>
    </interactant>
    <interactant intactId="EBI-739832">
        <id>Q8TBB1</id>
        <label>LNX1</label>
    </interactant>
    <organismsDiffer>false</organismsDiffer>
    <experiments>3</experiments>
</comment>
<comment type="interaction">
    <interactant intactId="EBI-357598">
        <id>P62191</id>
    </interactant>
    <interactant intactId="EBI-5650739">
        <id>P43356</id>
        <label>MAGEA2B</label>
    </interactant>
    <organismsDiffer>false</organismsDiffer>
    <experiments>3</experiments>
</comment>
<comment type="interaction">
    <interactant intactId="EBI-357598">
        <id>P62191</id>
    </interactant>
    <interactant intactId="EBI-748397">
        <id>P50222</id>
        <label>MEOX2</label>
    </interactant>
    <organismsDiffer>false</organismsDiffer>
    <experiments>3</experiments>
</comment>
<comment type="interaction">
    <interactant intactId="EBI-357598">
        <id>P62191</id>
    </interactant>
    <interactant intactId="EBI-10240813">
        <id>Q3KNR5</id>
        <label>PAX4</label>
    </interactant>
    <organismsDiffer>false</organismsDiffer>
    <experiments>3</experiments>
</comment>
<comment type="interaction">
    <interactant intactId="EBI-357598">
        <id>P62191</id>
    </interactant>
    <interactant intactId="EBI-359710">
        <id>P35998</id>
        <label>PSMC2</label>
    </interactant>
    <organismsDiffer>false</organismsDiffer>
    <experiments>9</experiments>
</comment>
<comment type="interaction">
    <interactant intactId="EBI-357598">
        <id>P62191</id>
    </interactant>
    <interactant intactId="EBI-743997">
        <id>P43686</id>
        <label>PSMC4</label>
    </interactant>
    <organismsDiffer>false</organismsDiffer>
    <experiments>5</experiments>
</comment>
<comment type="interaction">
    <interactant intactId="EBI-357598">
        <id>P62191</id>
    </interactant>
    <interactant intactId="EBI-357669">
        <id>P62333</id>
        <label>PSMC6</label>
    </interactant>
    <organismsDiffer>false</organismsDiffer>
    <experiments>8</experiments>
</comment>
<comment type="interaction">
    <interactant intactId="EBI-357598">
        <id>P62191</id>
    </interactant>
    <interactant intactId="EBI-357648">
        <id>Q13200</id>
        <label>PSMD2</label>
    </interactant>
    <organismsDiffer>false</organismsDiffer>
    <experiments>19</experiments>
</comment>
<comment type="interaction">
    <interactant intactId="EBI-357598">
        <id>P62191</id>
    </interactant>
    <interactant intactId="EBI-359318">
        <id>P55036</id>
        <label>PSMD4</label>
    </interactant>
    <organismsDiffer>false</organismsDiffer>
    <experiments>5</experiments>
</comment>
<comment type="interaction">
    <interactant intactId="EBI-357598">
        <id>P62191</id>
    </interactant>
    <interactant intactId="EBI-752143">
        <id>Q16401</id>
        <label>PSMD5</label>
    </interactant>
    <organismsDiffer>false</organismsDiffer>
    <experiments>14</experiments>
</comment>
<comment type="interaction">
    <interactant intactId="EBI-357598">
        <id>P62191</id>
    </interactant>
    <interactant intactId="EBI-985879">
        <id>P37840</id>
        <label>SNCA</label>
    </interactant>
    <organismsDiffer>false</organismsDiffer>
    <experiments>3</experiments>
</comment>
<comment type="interaction">
    <interactant intactId="EBI-357598">
        <id>P62191</id>
    </interactant>
    <interactant intactId="EBI-990792">
        <id>P00441</id>
        <label>SOD1</label>
    </interactant>
    <organismsDiffer>false</organismsDiffer>
    <experiments>5</experiments>
</comment>
<comment type="interaction">
    <interactant intactId="EBI-357598">
        <id>P62191</id>
    </interactant>
    <interactant intactId="EBI-349968">
        <id>O43463</id>
        <label>SUV39H1</label>
    </interactant>
    <organismsDiffer>false</organismsDiffer>
    <experiments>2</experiments>
</comment>
<comment type="interaction">
    <interactant intactId="EBI-357598">
        <id>P62191</id>
    </interactant>
    <interactant intactId="EBI-355164">
        <id>P55072</id>
        <label>VCP</label>
    </interactant>
    <organismsDiffer>false</organismsDiffer>
    <experiments>3</experiments>
</comment>
<comment type="interaction">
    <interactant intactId="EBI-357598">
        <id>P62191</id>
    </interactant>
    <interactant intactId="EBI-742740">
        <id>Q96BR9</id>
        <label>ZBTB8A</label>
    </interactant>
    <organismsDiffer>false</organismsDiffer>
    <experiments>3</experiments>
</comment>
<comment type="subcellular location">
    <subcellularLocation>
        <location>Cytoplasm</location>
    </subcellularLocation>
    <subcellularLocation>
        <location>Nucleus</location>
    </subcellularLocation>
    <subcellularLocation>
        <location evidence="15">Membrane</location>
        <topology evidence="15">Lipid-anchor</topology>
    </subcellularLocation>
</comment>
<comment type="alternative products">
    <event type="alternative splicing"/>
    <isoform>
        <id>P62191-1</id>
        <name>1</name>
        <sequence type="displayed"/>
    </isoform>
    <isoform>
        <id>P62191-2</id>
        <name>2</name>
        <sequence type="described" ref="VSP_055768"/>
    </isoform>
</comment>
<comment type="disease" evidence="13">
    <disease id="DI-06522">
        <name>Birk-Aharoni syndrome</name>
        <acronym>BKAH</acronym>
        <description>An autosomal recessive disorder characterized by failure to thrive, severe developmental delay, intellectual disability, spastic tetraplegia with central hypotonia, chorea, hearing loss, micropenis and undescended testes, as well as mild elevation of liver enzymes.</description>
        <dbReference type="MIM" id="620071"/>
    </disease>
    <text>The disease may be caused by variants affecting the gene represented in this entry.</text>
</comment>
<comment type="similarity">
    <text evidence="15">Belongs to the AAA ATPase family.</text>
</comment>
<feature type="initiator methionine" description="Removed" evidence="8 9 10 19">
    <location>
        <position position="1"/>
    </location>
</feature>
<feature type="chain" id="PRO_0000084677" description="26S proteasome regulatory subunit 4">
    <location>
        <begin position="2"/>
        <end position="440"/>
    </location>
</feature>
<feature type="region of interest" description="Disordered" evidence="2">
    <location>
        <begin position="1"/>
        <end position="49"/>
    </location>
</feature>
<feature type="region of interest" description="Disordered" evidence="2">
    <location>
        <begin position="84"/>
        <end position="104"/>
    </location>
</feature>
<feature type="compositionally biased region" description="Gly residues" evidence="2">
    <location>
        <begin position="1"/>
        <end position="13"/>
    </location>
</feature>
<feature type="compositionally biased region" description="Basic and acidic residues" evidence="2">
    <location>
        <begin position="14"/>
        <end position="26"/>
    </location>
</feature>
<feature type="compositionally biased region" description="Basic and acidic residues" evidence="2">
    <location>
        <begin position="86"/>
        <end position="103"/>
    </location>
</feature>
<feature type="binding site" evidence="1">
    <location>
        <begin position="226"/>
        <end position="233"/>
    </location>
    <ligand>
        <name>ATP</name>
        <dbReference type="ChEBI" id="CHEBI:30616"/>
    </ligand>
</feature>
<feature type="modified residue" description="Phosphoserine" evidence="18">
    <location>
        <position position="4"/>
    </location>
</feature>
<feature type="modified residue" description="Phosphothreonine" evidence="20 21">
    <location>
        <position position="53"/>
    </location>
</feature>
<feature type="modified residue" description="N6-acetyllysine" evidence="17">
    <location>
        <position position="258"/>
    </location>
</feature>
<feature type="modified residue" description="Phosphothreonine" evidence="20">
    <location>
        <position position="434"/>
    </location>
</feature>
<feature type="modified residue" description="Phosphotyrosine" evidence="16">
    <location>
        <position position="439"/>
    </location>
</feature>
<feature type="lipid moiety-binding region" description="N-myristoyl glycine" evidence="8 9 10">
    <location>
        <position position="2"/>
    </location>
</feature>
<feature type="cross-link" description="Glycyl lysine isopeptide (Lys-Gly) (interchain with G-Cter in ubiquitin)" evidence="7">
    <location>
        <position position="237"/>
    </location>
</feature>
<feature type="splice variant" id="VSP_055768" description="In isoform 2." evidence="14">
    <location>
        <begin position="1"/>
        <end position="73"/>
    </location>
</feature>
<feature type="sequence variant" id="VAR_087793" description="In BKAH; uncertain significance; contrary to the wild type, it fails to rescue eye defects in Rpt2-null Drosophila." evidence="13">
    <original>I</original>
    <variation>T</variation>
    <location>
        <position position="328"/>
    </location>
</feature>
<feature type="sequence conflict" description="In Ref. 1; AAA35484." evidence="15" ref="1">
    <original>K</original>
    <variation>E</variation>
    <location>
        <position position="19"/>
    </location>
</feature>
<feature type="sequence conflict" description="In Ref. 5; AAH67741." evidence="15" ref="5">
    <original>D</original>
    <variation>G</variation>
    <location>
        <position position="70"/>
    </location>
</feature>
<feature type="sequence conflict" description="In Ref. 5; AAH16368." evidence="15" ref="5">
    <original>H</original>
    <variation>R</variation>
    <location>
        <position position="120"/>
    </location>
</feature>
<feature type="helix" evidence="22">
    <location>
        <begin position="59"/>
        <end position="85"/>
    </location>
</feature>
<feature type="helix" evidence="22">
    <location>
        <begin position="96"/>
        <end position="103"/>
    </location>
</feature>
<feature type="strand" evidence="22">
    <location>
        <begin position="107"/>
        <end position="117"/>
    </location>
</feature>
<feature type="strand" evidence="22">
    <location>
        <begin position="120"/>
        <end position="124"/>
    </location>
</feature>
<feature type="strand" evidence="22">
    <location>
        <begin position="137"/>
        <end position="139"/>
    </location>
</feature>
<feature type="turn" evidence="22">
    <location>
        <begin position="141"/>
        <end position="143"/>
    </location>
</feature>
<feature type="strand" evidence="22">
    <location>
        <begin position="149"/>
        <end position="156"/>
    </location>
</feature>
<feature type="strand" evidence="22">
    <location>
        <begin position="158"/>
        <end position="162"/>
    </location>
</feature>
<feature type="turn" evidence="22">
    <location>
        <begin position="169"/>
        <end position="171"/>
    </location>
</feature>
<feature type="strand" evidence="22">
    <location>
        <begin position="172"/>
        <end position="175"/>
    </location>
</feature>
<feature type="turn" evidence="22">
    <location>
        <begin position="184"/>
        <end position="186"/>
    </location>
</feature>
<feature type="helix" evidence="22">
    <location>
        <begin position="191"/>
        <end position="198"/>
    </location>
</feature>
<feature type="turn" evidence="22">
    <location>
        <begin position="199"/>
        <end position="202"/>
    </location>
</feature>
<feature type="helix" evidence="22">
    <location>
        <begin position="203"/>
        <end position="206"/>
    </location>
</feature>
<feature type="helix" evidence="22">
    <location>
        <begin position="208"/>
        <end position="212"/>
    </location>
</feature>
<feature type="strand" evidence="22">
    <location>
        <begin position="222"/>
        <end position="225"/>
    </location>
</feature>
<feature type="helix" evidence="22">
    <location>
        <begin position="232"/>
        <end position="240"/>
    </location>
</feature>
<feature type="strand" evidence="22">
    <location>
        <begin position="245"/>
        <end position="250"/>
    </location>
</feature>
<feature type="helix" evidence="22">
    <location>
        <begin position="262"/>
        <end position="276"/>
    </location>
</feature>
<feature type="strand" evidence="22">
    <location>
        <begin position="278"/>
        <end position="284"/>
    </location>
</feature>
<feature type="helix" evidence="22">
    <location>
        <begin position="287"/>
        <end position="289"/>
    </location>
</feature>
<feature type="helix" evidence="22">
    <location>
        <begin position="300"/>
        <end position="312"/>
    </location>
</feature>
<feature type="turn" evidence="22">
    <location>
        <begin position="313"/>
        <end position="316"/>
    </location>
</feature>
<feature type="strand" evidence="22">
    <location>
        <begin position="317"/>
        <end position="320"/>
    </location>
</feature>
<feature type="strand" evidence="22">
    <location>
        <begin position="324"/>
        <end position="332"/>
    </location>
</feature>
<feature type="turn" evidence="22">
    <location>
        <begin position="339"/>
        <end position="342"/>
    </location>
</feature>
<feature type="turn" evidence="22">
    <location>
        <begin position="344"/>
        <end position="346"/>
    </location>
</feature>
<feature type="helix" evidence="22">
    <location>
        <begin position="358"/>
        <end position="368"/>
    </location>
</feature>
<feature type="strand" evidence="22">
    <location>
        <begin position="369"/>
        <end position="372"/>
    </location>
</feature>
<feature type="helix" evidence="22">
    <location>
        <begin position="381"/>
        <end position="384"/>
    </location>
</feature>
<feature type="helix" evidence="22">
    <location>
        <begin position="392"/>
        <end position="408"/>
    </location>
</feature>
<feature type="strand" evidence="22">
    <location>
        <begin position="412"/>
        <end position="414"/>
    </location>
</feature>
<feature type="helix" evidence="22">
    <location>
        <begin position="417"/>
        <end position="426"/>
    </location>
</feature>
<protein>
    <recommendedName>
        <fullName>26S proteasome regulatory subunit 4</fullName>
        <shortName>P26s4</shortName>
    </recommendedName>
    <alternativeName>
        <fullName>26S proteasome AAA-ATPase subunit RPT2</fullName>
    </alternativeName>
    <alternativeName>
        <fullName>Proteasome 26S subunit ATPase 1</fullName>
    </alternativeName>
</protein>
<name>PRS4_HUMAN</name>
<accession>P62191</accession>
<accession>B4DR63</accession>
<accession>P49014</accession>
<accession>Q03527</accession>
<accession>Q6IAW0</accession>
<accession>Q6NW36</accession>
<accession>Q96AZ3</accession>